<sequence length="197" mass="22188">MEAFRTHTGIGVPLRRSNVDTDQIIPAVYLKRVTRTGFEDGLFAAWRNDPSFVLNLPPFDRGSVLVAGPDFGTGSSREHAVWALMDYGFRVVISSRFADIFRGNAGKAGLLAAEVNQNDVELLWKLIEQNPGLEITVNLQDRNIIAGTVMVPFTIDDYTAWRLLEGLDDIGLTLRKQSEIEDYERRRPSWKPRTLPV</sequence>
<feature type="chain" id="PRO_1000063790" description="3-isopropylmalate dehydratase small subunit">
    <location>
        <begin position="1"/>
        <end position="197"/>
    </location>
</feature>
<evidence type="ECO:0000255" key="1">
    <source>
        <dbReference type="HAMAP-Rule" id="MF_01031"/>
    </source>
</evidence>
<protein>
    <recommendedName>
        <fullName evidence="1">3-isopropylmalate dehydratase small subunit</fullName>
        <ecNumber evidence="1">4.2.1.33</ecNumber>
    </recommendedName>
    <alternativeName>
        <fullName evidence="1">Alpha-IPM isomerase</fullName>
        <shortName evidence="1">IPMI</shortName>
    </alternativeName>
    <alternativeName>
        <fullName evidence="1">Isopropylmalate isomerase</fullName>
    </alternativeName>
</protein>
<dbReference type="EC" id="4.2.1.33" evidence="1"/>
<dbReference type="EMBL" id="CP000518">
    <property type="protein sequence ID" value="ABL91167.1"/>
    <property type="molecule type" value="Genomic_DNA"/>
</dbReference>
<dbReference type="SMR" id="A1UEA9"/>
<dbReference type="STRING" id="189918.Mkms_1968"/>
<dbReference type="KEGG" id="mkm:Mkms_1968"/>
<dbReference type="HOGENOM" id="CLU_081378_0_1_11"/>
<dbReference type="OrthoDB" id="9777465at2"/>
<dbReference type="UniPathway" id="UPA00048">
    <property type="reaction ID" value="UER00071"/>
</dbReference>
<dbReference type="GO" id="GO:0009316">
    <property type="term" value="C:3-isopropylmalate dehydratase complex"/>
    <property type="evidence" value="ECO:0007669"/>
    <property type="project" value="InterPro"/>
</dbReference>
<dbReference type="GO" id="GO:0003861">
    <property type="term" value="F:3-isopropylmalate dehydratase activity"/>
    <property type="evidence" value="ECO:0007669"/>
    <property type="project" value="UniProtKB-UniRule"/>
</dbReference>
<dbReference type="GO" id="GO:0009098">
    <property type="term" value="P:L-leucine biosynthetic process"/>
    <property type="evidence" value="ECO:0007669"/>
    <property type="project" value="UniProtKB-UniRule"/>
</dbReference>
<dbReference type="CDD" id="cd01577">
    <property type="entry name" value="IPMI_Swivel"/>
    <property type="match status" value="1"/>
</dbReference>
<dbReference type="FunFam" id="3.20.19.10:FF:000003">
    <property type="entry name" value="3-isopropylmalate dehydratase small subunit"/>
    <property type="match status" value="1"/>
</dbReference>
<dbReference type="Gene3D" id="3.20.19.10">
    <property type="entry name" value="Aconitase, domain 4"/>
    <property type="match status" value="1"/>
</dbReference>
<dbReference type="HAMAP" id="MF_01031">
    <property type="entry name" value="LeuD_type1"/>
    <property type="match status" value="1"/>
</dbReference>
<dbReference type="InterPro" id="IPR004431">
    <property type="entry name" value="3-IsopropMal_deHydase_ssu"/>
</dbReference>
<dbReference type="InterPro" id="IPR015928">
    <property type="entry name" value="Aconitase/3IPM_dehydase_swvl"/>
</dbReference>
<dbReference type="InterPro" id="IPR000573">
    <property type="entry name" value="AconitaseA/IPMdHydase_ssu_swvl"/>
</dbReference>
<dbReference type="InterPro" id="IPR033940">
    <property type="entry name" value="IPMI_Swivel"/>
</dbReference>
<dbReference type="InterPro" id="IPR050075">
    <property type="entry name" value="LeuD"/>
</dbReference>
<dbReference type="NCBIfam" id="TIGR00171">
    <property type="entry name" value="leuD"/>
    <property type="match status" value="1"/>
</dbReference>
<dbReference type="NCBIfam" id="NF002458">
    <property type="entry name" value="PRK01641.1"/>
    <property type="match status" value="1"/>
</dbReference>
<dbReference type="PANTHER" id="PTHR43345:SF5">
    <property type="entry name" value="3-ISOPROPYLMALATE DEHYDRATASE SMALL SUBUNIT"/>
    <property type="match status" value="1"/>
</dbReference>
<dbReference type="PANTHER" id="PTHR43345">
    <property type="entry name" value="3-ISOPROPYLMALATE DEHYDRATASE SMALL SUBUNIT 2-RELATED-RELATED"/>
    <property type="match status" value="1"/>
</dbReference>
<dbReference type="Pfam" id="PF00694">
    <property type="entry name" value="Aconitase_C"/>
    <property type="match status" value="1"/>
</dbReference>
<dbReference type="SUPFAM" id="SSF52016">
    <property type="entry name" value="LeuD/IlvD-like"/>
    <property type="match status" value="1"/>
</dbReference>
<gene>
    <name evidence="1" type="primary">leuD</name>
    <name type="ordered locus">Mkms_1968</name>
</gene>
<accession>A1UEA9</accession>
<reference key="1">
    <citation type="submission" date="2006-12" db="EMBL/GenBank/DDBJ databases">
        <title>Complete sequence of chromosome of Mycobacterium sp. KMS.</title>
        <authorList>
            <consortium name="US DOE Joint Genome Institute"/>
            <person name="Copeland A."/>
            <person name="Lucas S."/>
            <person name="Lapidus A."/>
            <person name="Barry K."/>
            <person name="Detter J.C."/>
            <person name="Glavina del Rio T."/>
            <person name="Hammon N."/>
            <person name="Israni S."/>
            <person name="Dalin E."/>
            <person name="Tice H."/>
            <person name="Pitluck S."/>
            <person name="Kiss H."/>
            <person name="Brettin T."/>
            <person name="Bruce D."/>
            <person name="Han C."/>
            <person name="Tapia R."/>
            <person name="Gilna P."/>
            <person name="Schmutz J."/>
            <person name="Larimer F."/>
            <person name="Land M."/>
            <person name="Hauser L."/>
            <person name="Kyrpides N."/>
            <person name="Mikhailova N."/>
            <person name="Miller C.D."/>
            <person name="Richardson P."/>
        </authorList>
    </citation>
    <scope>NUCLEOTIDE SEQUENCE [LARGE SCALE GENOMIC DNA]</scope>
    <source>
        <strain>KMS</strain>
    </source>
</reference>
<proteinExistence type="inferred from homology"/>
<organism>
    <name type="scientific">Mycobacterium sp. (strain KMS)</name>
    <dbReference type="NCBI Taxonomy" id="189918"/>
    <lineage>
        <taxon>Bacteria</taxon>
        <taxon>Bacillati</taxon>
        <taxon>Actinomycetota</taxon>
        <taxon>Actinomycetes</taxon>
        <taxon>Mycobacteriales</taxon>
        <taxon>Mycobacteriaceae</taxon>
        <taxon>Mycobacterium</taxon>
    </lineage>
</organism>
<keyword id="KW-0028">Amino-acid biosynthesis</keyword>
<keyword id="KW-0100">Branched-chain amino acid biosynthesis</keyword>
<keyword id="KW-0432">Leucine biosynthesis</keyword>
<keyword id="KW-0456">Lyase</keyword>
<name>LEUD_MYCSK</name>
<comment type="function">
    <text evidence="1">Catalyzes the isomerization between 2-isopropylmalate and 3-isopropylmalate, via the formation of 2-isopropylmaleate.</text>
</comment>
<comment type="catalytic activity">
    <reaction evidence="1">
        <text>(2R,3S)-3-isopropylmalate = (2S)-2-isopropylmalate</text>
        <dbReference type="Rhea" id="RHEA:32287"/>
        <dbReference type="ChEBI" id="CHEBI:1178"/>
        <dbReference type="ChEBI" id="CHEBI:35121"/>
        <dbReference type="EC" id="4.2.1.33"/>
    </reaction>
</comment>
<comment type="pathway">
    <text evidence="1">Amino-acid biosynthesis; L-leucine biosynthesis; L-leucine from 3-methyl-2-oxobutanoate: step 2/4.</text>
</comment>
<comment type="subunit">
    <text evidence="1">Heterodimer of LeuC and LeuD.</text>
</comment>
<comment type="similarity">
    <text evidence="1">Belongs to the LeuD family. LeuD type 1 subfamily.</text>
</comment>